<proteinExistence type="inferred from homology"/>
<feature type="chain" id="PRO_1000119733" description="Chaperone protein DnaK">
    <location>
        <begin position="1"/>
        <end position="598"/>
    </location>
</feature>
<feature type="region of interest" description="Disordered" evidence="2">
    <location>
        <begin position="571"/>
        <end position="598"/>
    </location>
</feature>
<feature type="compositionally biased region" description="Low complexity" evidence="2">
    <location>
        <begin position="571"/>
        <end position="591"/>
    </location>
</feature>
<feature type="modified residue" description="Phosphothreonine; by autocatalysis" evidence="1">
    <location>
        <position position="175"/>
    </location>
</feature>
<evidence type="ECO:0000255" key="1">
    <source>
        <dbReference type="HAMAP-Rule" id="MF_00332"/>
    </source>
</evidence>
<evidence type="ECO:0000256" key="2">
    <source>
        <dbReference type="SAM" id="MobiDB-lite"/>
    </source>
</evidence>
<name>DNAK_MYCAP</name>
<dbReference type="EMBL" id="CU179680">
    <property type="protein sequence ID" value="CAL58844.1"/>
    <property type="molecule type" value="Genomic_DNA"/>
</dbReference>
<dbReference type="RefSeq" id="WP_011949326.1">
    <property type="nucleotide sequence ID" value="NC_009497.1"/>
</dbReference>
<dbReference type="SMR" id="A5IXT5"/>
<dbReference type="STRING" id="347257.MAG1460"/>
<dbReference type="GeneID" id="93357911"/>
<dbReference type="KEGG" id="maa:MAG1460"/>
<dbReference type="HOGENOM" id="CLU_005965_2_4_14"/>
<dbReference type="Proteomes" id="UP000007065">
    <property type="component" value="Chromosome"/>
</dbReference>
<dbReference type="GO" id="GO:0005524">
    <property type="term" value="F:ATP binding"/>
    <property type="evidence" value="ECO:0007669"/>
    <property type="project" value="UniProtKB-UniRule"/>
</dbReference>
<dbReference type="GO" id="GO:0140662">
    <property type="term" value="F:ATP-dependent protein folding chaperone"/>
    <property type="evidence" value="ECO:0007669"/>
    <property type="project" value="InterPro"/>
</dbReference>
<dbReference type="GO" id="GO:0051082">
    <property type="term" value="F:unfolded protein binding"/>
    <property type="evidence" value="ECO:0007669"/>
    <property type="project" value="InterPro"/>
</dbReference>
<dbReference type="CDD" id="cd10234">
    <property type="entry name" value="ASKHA_NBD_HSP70_DnaK-like"/>
    <property type="match status" value="1"/>
</dbReference>
<dbReference type="FunFam" id="2.60.34.10:FF:000014">
    <property type="entry name" value="Chaperone protein DnaK HSP70"/>
    <property type="match status" value="1"/>
</dbReference>
<dbReference type="FunFam" id="3.30.420.40:FF:000071">
    <property type="entry name" value="Molecular chaperone DnaK"/>
    <property type="match status" value="1"/>
</dbReference>
<dbReference type="FunFam" id="3.90.640.10:FF:000003">
    <property type="entry name" value="Molecular chaperone DnaK"/>
    <property type="match status" value="1"/>
</dbReference>
<dbReference type="Gene3D" id="1.20.1270.10">
    <property type="match status" value="1"/>
</dbReference>
<dbReference type="Gene3D" id="3.30.420.40">
    <property type="match status" value="3"/>
</dbReference>
<dbReference type="Gene3D" id="3.90.640.10">
    <property type="entry name" value="Actin, Chain A, domain 4"/>
    <property type="match status" value="1"/>
</dbReference>
<dbReference type="Gene3D" id="2.60.34.10">
    <property type="entry name" value="Substrate Binding Domain Of DNAk, Chain A, domain 1"/>
    <property type="match status" value="1"/>
</dbReference>
<dbReference type="HAMAP" id="MF_00332">
    <property type="entry name" value="DnaK"/>
    <property type="match status" value="1"/>
</dbReference>
<dbReference type="InterPro" id="IPR043129">
    <property type="entry name" value="ATPase_NBD"/>
</dbReference>
<dbReference type="InterPro" id="IPR012725">
    <property type="entry name" value="Chaperone_DnaK"/>
</dbReference>
<dbReference type="InterPro" id="IPR018181">
    <property type="entry name" value="Heat_shock_70_CS"/>
</dbReference>
<dbReference type="InterPro" id="IPR029048">
    <property type="entry name" value="HSP70_C_sf"/>
</dbReference>
<dbReference type="InterPro" id="IPR029047">
    <property type="entry name" value="HSP70_peptide-bd_sf"/>
</dbReference>
<dbReference type="InterPro" id="IPR013126">
    <property type="entry name" value="Hsp_70_fam"/>
</dbReference>
<dbReference type="NCBIfam" id="NF001413">
    <property type="entry name" value="PRK00290.1"/>
    <property type="match status" value="1"/>
</dbReference>
<dbReference type="PANTHER" id="PTHR19375">
    <property type="entry name" value="HEAT SHOCK PROTEIN 70KDA"/>
    <property type="match status" value="1"/>
</dbReference>
<dbReference type="Pfam" id="PF00012">
    <property type="entry name" value="HSP70"/>
    <property type="match status" value="2"/>
</dbReference>
<dbReference type="PRINTS" id="PR00301">
    <property type="entry name" value="HEATSHOCK70"/>
</dbReference>
<dbReference type="SUPFAM" id="SSF53067">
    <property type="entry name" value="Actin-like ATPase domain"/>
    <property type="match status" value="2"/>
</dbReference>
<dbReference type="SUPFAM" id="SSF100934">
    <property type="entry name" value="Heat shock protein 70kD (HSP70), C-terminal subdomain"/>
    <property type="match status" value="1"/>
</dbReference>
<dbReference type="SUPFAM" id="SSF100920">
    <property type="entry name" value="Heat shock protein 70kD (HSP70), peptide-binding domain"/>
    <property type="match status" value="1"/>
</dbReference>
<dbReference type="PROSITE" id="PS00297">
    <property type="entry name" value="HSP70_1"/>
    <property type="match status" value="1"/>
</dbReference>
<dbReference type="PROSITE" id="PS00329">
    <property type="entry name" value="HSP70_2"/>
    <property type="match status" value="1"/>
</dbReference>
<dbReference type="PROSITE" id="PS01036">
    <property type="entry name" value="HSP70_3"/>
    <property type="match status" value="1"/>
</dbReference>
<reference key="1">
    <citation type="journal article" date="2007" name="PLoS Genet.">
        <title>Being pathogenic, plastic, and sexual while living with a nearly minimal bacterial genome.</title>
        <authorList>
            <person name="Sirand-Pugnet P."/>
            <person name="Lartigue C."/>
            <person name="Marenda M."/>
            <person name="Jacob D."/>
            <person name="Barre A."/>
            <person name="Barbe V."/>
            <person name="Schenowitz C."/>
            <person name="Mangenot S."/>
            <person name="Couloux A."/>
            <person name="Segurens B."/>
            <person name="de Daruvar A."/>
            <person name="Blanchard A."/>
            <person name="Citti C."/>
        </authorList>
    </citation>
    <scope>NUCLEOTIDE SEQUENCE [LARGE SCALE GENOMIC DNA]</scope>
    <source>
        <strain>NCTC 10123 / CIP 59.7 / PG2</strain>
    </source>
</reference>
<accession>A5IXT5</accession>
<keyword id="KW-0067">ATP-binding</keyword>
<keyword id="KW-0143">Chaperone</keyword>
<keyword id="KW-0547">Nucleotide-binding</keyword>
<keyword id="KW-0597">Phosphoprotein</keyword>
<keyword id="KW-1185">Reference proteome</keyword>
<keyword id="KW-0346">Stress response</keyword>
<sequence length="598" mass="65246">MAKEVIIGIDLGTTNSVVSIVDNGSPVVLENLNGKRTTPSVVSFKDGEIIVGDNAKNQIETNPDTVASIKRLMGTSKTVHVNNKDYKPEEISAMILEHLKKYAEEKIGHKVEKAVITVPAYFDNAQREATKIAGKIAGLEVLRIINEPTAAALAFGLDKVKKEQKILVFDLGGGTFDVSILELAEGTFEVLSTAGDNRLGGDDWDNEIVKWLIDLIKKDYKTDVTNNKMAMARLKAAAEKAKIDLSSSQQATIMLPFLVMQQGSEPISVEATLRRSQFEEMTSHLVERCRKPIETALADAKIKISDLDDVILVGGSTRIPAVQQLVESILNKKANRSVNPDEVVAMGAAIQGAVLAGEIDDVLLVDVTPLTLGIETAGGIATPLIPRNTRIPITKSEVFTTFEDNQSEVTIRIVQGERPLASENKLLGQFNLGGIRVAPRGVPQIEVSFKIDANGITTVLAKDKDTNKEQSITIKNSSKLSESEIEEMIKDAEKNREADAKRAEEISTIIQAENLVNSLEKEMNDGNIVIPEEEKAKIADYIKEVKELINNKDVEQLKKKIDELNAAYNMAKSAAASSNKDDSLNNNSSSNNDEETFE</sequence>
<gene>
    <name evidence="1" type="primary">dnaK</name>
    <name type="ordered locus">MAG1460</name>
</gene>
<protein>
    <recommendedName>
        <fullName evidence="1">Chaperone protein DnaK</fullName>
    </recommendedName>
    <alternativeName>
        <fullName evidence="1">HSP70</fullName>
    </alternativeName>
    <alternativeName>
        <fullName evidence="1">Heat shock 70 kDa protein</fullName>
    </alternativeName>
    <alternativeName>
        <fullName evidence="1">Heat shock protein 70</fullName>
    </alternativeName>
</protein>
<comment type="function">
    <text evidence="1">Acts as a chaperone.</text>
</comment>
<comment type="induction">
    <text evidence="1">By stress conditions e.g. heat shock.</text>
</comment>
<comment type="similarity">
    <text evidence="1">Belongs to the heat shock protein 70 family.</text>
</comment>
<organism>
    <name type="scientific">Mycoplasmopsis agalactiae (strain NCTC 10123 / CIP 59.7 / PG2)</name>
    <name type="common">Mycoplasma agalactiae</name>
    <dbReference type="NCBI Taxonomy" id="347257"/>
    <lineage>
        <taxon>Bacteria</taxon>
        <taxon>Bacillati</taxon>
        <taxon>Mycoplasmatota</taxon>
        <taxon>Mycoplasmoidales</taxon>
        <taxon>Metamycoplasmataceae</taxon>
        <taxon>Mycoplasmopsis</taxon>
    </lineage>
</organism>